<organism>
    <name type="scientific">Mus musculus</name>
    <name type="common">Mouse</name>
    <dbReference type="NCBI Taxonomy" id="10090"/>
    <lineage>
        <taxon>Eukaryota</taxon>
        <taxon>Metazoa</taxon>
        <taxon>Chordata</taxon>
        <taxon>Craniata</taxon>
        <taxon>Vertebrata</taxon>
        <taxon>Euteleostomi</taxon>
        <taxon>Mammalia</taxon>
        <taxon>Eutheria</taxon>
        <taxon>Euarchontoglires</taxon>
        <taxon>Glires</taxon>
        <taxon>Rodentia</taxon>
        <taxon>Myomorpha</taxon>
        <taxon>Muroidea</taxon>
        <taxon>Muridae</taxon>
        <taxon>Murinae</taxon>
        <taxon>Mus</taxon>
        <taxon>Mus</taxon>
    </lineage>
</organism>
<protein>
    <recommendedName>
        <fullName>Proline-rich protein 29</fullName>
    </recommendedName>
</protein>
<feature type="chain" id="PRO_0000344469" description="Proline-rich protein 29">
    <location>
        <begin position="1"/>
        <end position="187"/>
    </location>
</feature>
<feature type="region of interest" description="Disordered" evidence="1">
    <location>
        <begin position="133"/>
        <end position="187"/>
    </location>
</feature>
<feature type="splice variant" id="VSP_034786" description="In isoform 2." evidence="2">
    <location>
        <begin position="1"/>
        <end position="50"/>
    </location>
</feature>
<proteinExistence type="evidence at transcript level"/>
<accession>B1ARI9</accession>
<accession>Q9D7I4</accession>
<sequence length="187" mass="20763">MASLGSGNWSGVPTQSTAPMPWVTILQPFPWTVPSSQPQHNRVKEDLLELMMLQNAQMHQLLLGQLVADALNPGPEWPSPPVHTDSHEEQMEEEMEMQEQEPLVYHHHYLPCPVTPLGPMSLWPASFLPVPPHQPPWQGEPRIQHQPPASRQEEVRDVPPPPPPSATGTVGADVPPASDYYDAESLP</sequence>
<reference key="1">
    <citation type="journal article" date="2005" name="Science">
        <title>The transcriptional landscape of the mammalian genome.</title>
        <authorList>
            <person name="Carninci P."/>
            <person name="Kasukawa T."/>
            <person name="Katayama S."/>
            <person name="Gough J."/>
            <person name="Frith M.C."/>
            <person name="Maeda N."/>
            <person name="Oyama R."/>
            <person name="Ravasi T."/>
            <person name="Lenhard B."/>
            <person name="Wells C."/>
            <person name="Kodzius R."/>
            <person name="Shimokawa K."/>
            <person name="Bajic V.B."/>
            <person name="Brenner S.E."/>
            <person name="Batalov S."/>
            <person name="Forrest A.R."/>
            <person name="Zavolan M."/>
            <person name="Davis M.J."/>
            <person name="Wilming L.G."/>
            <person name="Aidinis V."/>
            <person name="Allen J.E."/>
            <person name="Ambesi-Impiombato A."/>
            <person name="Apweiler R."/>
            <person name="Aturaliya R.N."/>
            <person name="Bailey T.L."/>
            <person name="Bansal M."/>
            <person name="Baxter L."/>
            <person name="Beisel K.W."/>
            <person name="Bersano T."/>
            <person name="Bono H."/>
            <person name="Chalk A.M."/>
            <person name="Chiu K.P."/>
            <person name="Choudhary V."/>
            <person name="Christoffels A."/>
            <person name="Clutterbuck D.R."/>
            <person name="Crowe M.L."/>
            <person name="Dalla E."/>
            <person name="Dalrymple B.P."/>
            <person name="de Bono B."/>
            <person name="Della Gatta G."/>
            <person name="di Bernardo D."/>
            <person name="Down T."/>
            <person name="Engstrom P."/>
            <person name="Fagiolini M."/>
            <person name="Faulkner G."/>
            <person name="Fletcher C.F."/>
            <person name="Fukushima T."/>
            <person name="Furuno M."/>
            <person name="Futaki S."/>
            <person name="Gariboldi M."/>
            <person name="Georgii-Hemming P."/>
            <person name="Gingeras T.R."/>
            <person name="Gojobori T."/>
            <person name="Green R.E."/>
            <person name="Gustincich S."/>
            <person name="Harbers M."/>
            <person name="Hayashi Y."/>
            <person name="Hensch T.K."/>
            <person name="Hirokawa N."/>
            <person name="Hill D."/>
            <person name="Huminiecki L."/>
            <person name="Iacono M."/>
            <person name="Ikeo K."/>
            <person name="Iwama A."/>
            <person name="Ishikawa T."/>
            <person name="Jakt M."/>
            <person name="Kanapin A."/>
            <person name="Katoh M."/>
            <person name="Kawasawa Y."/>
            <person name="Kelso J."/>
            <person name="Kitamura H."/>
            <person name="Kitano H."/>
            <person name="Kollias G."/>
            <person name="Krishnan S.P."/>
            <person name="Kruger A."/>
            <person name="Kummerfeld S.K."/>
            <person name="Kurochkin I.V."/>
            <person name="Lareau L.F."/>
            <person name="Lazarevic D."/>
            <person name="Lipovich L."/>
            <person name="Liu J."/>
            <person name="Liuni S."/>
            <person name="McWilliam S."/>
            <person name="Madan Babu M."/>
            <person name="Madera M."/>
            <person name="Marchionni L."/>
            <person name="Matsuda H."/>
            <person name="Matsuzawa S."/>
            <person name="Miki H."/>
            <person name="Mignone F."/>
            <person name="Miyake S."/>
            <person name="Morris K."/>
            <person name="Mottagui-Tabar S."/>
            <person name="Mulder N."/>
            <person name="Nakano N."/>
            <person name="Nakauchi H."/>
            <person name="Ng P."/>
            <person name="Nilsson R."/>
            <person name="Nishiguchi S."/>
            <person name="Nishikawa S."/>
            <person name="Nori F."/>
            <person name="Ohara O."/>
            <person name="Okazaki Y."/>
            <person name="Orlando V."/>
            <person name="Pang K.C."/>
            <person name="Pavan W.J."/>
            <person name="Pavesi G."/>
            <person name="Pesole G."/>
            <person name="Petrovsky N."/>
            <person name="Piazza S."/>
            <person name="Reed J."/>
            <person name="Reid J.F."/>
            <person name="Ring B.Z."/>
            <person name="Ringwald M."/>
            <person name="Rost B."/>
            <person name="Ruan Y."/>
            <person name="Salzberg S.L."/>
            <person name="Sandelin A."/>
            <person name="Schneider C."/>
            <person name="Schoenbach C."/>
            <person name="Sekiguchi K."/>
            <person name="Semple C.A."/>
            <person name="Seno S."/>
            <person name="Sessa L."/>
            <person name="Sheng Y."/>
            <person name="Shibata Y."/>
            <person name="Shimada H."/>
            <person name="Shimada K."/>
            <person name="Silva D."/>
            <person name="Sinclair B."/>
            <person name="Sperling S."/>
            <person name="Stupka E."/>
            <person name="Sugiura K."/>
            <person name="Sultana R."/>
            <person name="Takenaka Y."/>
            <person name="Taki K."/>
            <person name="Tammoja K."/>
            <person name="Tan S.L."/>
            <person name="Tang S."/>
            <person name="Taylor M.S."/>
            <person name="Tegner J."/>
            <person name="Teichmann S.A."/>
            <person name="Ueda H.R."/>
            <person name="van Nimwegen E."/>
            <person name="Verardo R."/>
            <person name="Wei C.L."/>
            <person name="Yagi K."/>
            <person name="Yamanishi H."/>
            <person name="Zabarovsky E."/>
            <person name="Zhu S."/>
            <person name="Zimmer A."/>
            <person name="Hide W."/>
            <person name="Bult C."/>
            <person name="Grimmond S.M."/>
            <person name="Teasdale R.D."/>
            <person name="Liu E.T."/>
            <person name="Brusic V."/>
            <person name="Quackenbush J."/>
            <person name="Wahlestedt C."/>
            <person name="Mattick J.S."/>
            <person name="Hume D.A."/>
            <person name="Kai C."/>
            <person name="Sasaki D."/>
            <person name="Tomaru Y."/>
            <person name="Fukuda S."/>
            <person name="Kanamori-Katayama M."/>
            <person name="Suzuki M."/>
            <person name="Aoki J."/>
            <person name="Arakawa T."/>
            <person name="Iida J."/>
            <person name="Imamura K."/>
            <person name="Itoh M."/>
            <person name="Kato T."/>
            <person name="Kawaji H."/>
            <person name="Kawagashira N."/>
            <person name="Kawashima T."/>
            <person name="Kojima M."/>
            <person name="Kondo S."/>
            <person name="Konno H."/>
            <person name="Nakano K."/>
            <person name="Ninomiya N."/>
            <person name="Nishio T."/>
            <person name="Okada M."/>
            <person name="Plessy C."/>
            <person name="Shibata K."/>
            <person name="Shiraki T."/>
            <person name="Suzuki S."/>
            <person name="Tagami M."/>
            <person name="Waki K."/>
            <person name="Watahiki A."/>
            <person name="Okamura-Oho Y."/>
            <person name="Suzuki H."/>
            <person name="Kawai J."/>
            <person name="Hayashizaki Y."/>
        </authorList>
    </citation>
    <scope>NUCLEOTIDE SEQUENCE [LARGE SCALE MRNA] (ISOFORM 2)</scope>
    <source>
        <strain>C57BL/6J</strain>
        <tissue>Tongue</tissue>
    </source>
</reference>
<reference key="2">
    <citation type="journal article" date="2009" name="PLoS Biol.">
        <title>Lineage-specific biology revealed by a finished genome assembly of the mouse.</title>
        <authorList>
            <person name="Church D.M."/>
            <person name="Goodstadt L."/>
            <person name="Hillier L.W."/>
            <person name="Zody M.C."/>
            <person name="Goldstein S."/>
            <person name="She X."/>
            <person name="Bult C.J."/>
            <person name="Agarwala R."/>
            <person name="Cherry J.L."/>
            <person name="DiCuccio M."/>
            <person name="Hlavina W."/>
            <person name="Kapustin Y."/>
            <person name="Meric P."/>
            <person name="Maglott D."/>
            <person name="Birtle Z."/>
            <person name="Marques A.C."/>
            <person name="Graves T."/>
            <person name="Zhou S."/>
            <person name="Teague B."/>
            <person name="Potamousis K."/>
            <person name="Churas C."/>
            <person name="Place M."/>
            <person name="Herschleb J."/>
            <person name="Runnheim R."/>
            <person name="Forrest D."/>
            <person name="Amos-Landgraf J."/>
            <person name="Schwartz D.C."/>
            <person name="Cheng Z."/>
            <person name="Lindblad-Toh K."/>
            <person name="Eichler E.E."/>
            <person name="Ponting C.P."/>
        </authorList>
    </citation>
    <scope>NUCLEOTIDE SEQUENCE [LARGE SCALE GENOMIC DNA]</scope>
    <source>
        <strain>C57BL/6J</strain>
    </source>
</reference>
<comment type="alternative products">
    <event type="alternative splicing"/>
    <isoform>
        <id>B1ARI9-1</id>
        <name>1</name>
        <sequence type="displayed"/>
    </isoform>
    <isoform>
        <id>B1ARI9-2</id>
        <name>2</name>
        <sequence type="described" ref="VSP_034786"/>
    </isoform>
</comment>
<evidence type="ECO:0000256" key="1">
    <source>
        <dbReference type="SAM" id="MobiDB-lite"/>
    </source>
</evidence>
<evidence type="ECO:0000303" key="2">
    <source>
    </source>
</evidence>
<keyword id="KW-0025">Alternative splicing</keyword>
<keyword id="KW-1185">Reference proteome</keyword>
<dbReference type="EMBL" id="AK009213">
    <property type="protein sequence ID" value="BAB26142.1"/>
    <property type="molecule type" value="mRNA"/>
</dbReference>
<dbReference type="EMBL" id="AL604045">
    <property type="status" value="NOT_ANNOTATED_CDS"/>
    <property type="molecule type" value="Genomic_DNA"/>
</dbReference>
<dbReference type="CCDS" id="CCDS48962.1">
    <molecule id="B1ARI9-1"/>
</dbReference>
<dbReference type="RefSeq" id="NP_083621.1">
    <molecule id="B1ARI9-1"/>
    <property type="nucleotide sequence ID" value="NM_029345.2"/>
</dbReference>
<dbReference type="RefSeq" id="XP_036012949.1">
    <molecule id="B1ARI9-2"/>
    <property type="nucleotide sequence ID" value="XM_036157056.1"/>
</dbReference>
<dbReference type="PaxDb" id="10090-ENSMUSP00000102429"/>
<dbReference type="Antibodypedia" id="52676">
    <property type="antibodies" value="1 antibodies from 1 providers"/>
</dbReference>
<dbReference type="Ensembl" id="ENSMUST00000009354.10">
    <molecule id="B1ARI9-2"/>
    <property type="protein sequence ID" value="ENSMUSP00000009354.4"/>
    <property type="gene ID" value="ENSMUSG00000009210.11"/>
</dbReference>
<dbReference type="Ensembl" id="ENSMUST00000106816.8">
    <molecule id="B1ARI9-1"/>
    <property type="protein sequence ID" value="ENSMUSP00000102429.2"/>
    <property type="gene ID" value="ENSMUSG00000009210.11"/>
</dbReference>
<dbReference type="Ensembl" id="ENSMUST00000190795.7">
    <molecule id="B1ARI9-2"/>
    <property type="protein sequence ID" value="ENSMUSP00000140541.2"/>
    <property type="gene ID" value="ENSMUSG00000009210.11"/>
</dbReference>
<dbReference type="GeneID" id="75573"/>
<dbReference type="KEGG" id="mmu:75573"/>
<dbReference type="UCSC" id="uc007lyv.2">
    <molecule id="B1ARI9-1"/>
    <property type="organism name" value="mouse"/>
</dbReference>
<dbReference type="AGR" id="MGI:1922823"/>
<dbReference type="CTD" id="92340"/>
<dbReference type="MGI" id="MGI:1922823">
    <property type="gene designation" value="Prr29"/>
</dbReference>
<dbReference type="VEuPathDB" id="HostDB:ENSMUSG00000009210"/>
<dbReference type="eggNOG" id="ENOG502S6FU">
    <property type="taxonomic scope" value="Eukaryota"/>
</dbReference>
<dbReference type="GeneTree" id="ENSGT00390000002000"/>
<dbReference type="HOGENOM" id="CLU_093882_1_0_1"/>
<dbReference type="InParanoid" id="B1ARI9"/>
<dbReference type="OMA" id="QVIMNNI"/>
<dbReference type="OrthoDB" id="86665at9989"/>
<dbReference type="TreeFam" id="TF336319"/>
<dbReference type="BioGRID-ORCS" id="75573">
    <property type="hits" value="4 hits in 44 CRISPR screens"/>
</dbReference>
<dbReference type="ChiTaRS" id="Prr29">
    <property type="organism name" value="mouse"/>
</dbReference>
<dbReference type="PRO" id="PR:B1ARI9"/>
<dbReference type="Proteomes" id="UP000000589">
    <property type="component" value="Chromosome 11"/>
</dbReference>
<dbReference type="RNAct" id="B1ARI9">
    <property type="molecule type" value="protein"/>
</dbReference>
<dbReference type="Bgee" id="ENSMUSG00000009210">
    <property type="expression patterns" value="Expressed in hindlimb stylopod muscle and 40 other cell types or tissues"/>
</dbReference>
<dbReference type="ExpressionAtlas" id="B1ARI9">
    <property type="expression patterns" value="baseline and differential"/>
</dbReference>
<dbReference type="InterPro" id="IPR027904">
    <property type="entry name" value="DUF4587"/>
</dbReference>
<dbReference type="InterPro" id="IPR038915">
    <property type="entry name" value="PRR29-like"/>
</dbReference>
<dbReference type="PANTHER" id="PTHR28604">
    <property type="match status" value="1"/>
</dbReference>
<dbReference type="PANTHER" id="PTHR28604:SF1">
    <property type="entry name" value="PROLINE-RICH PROTEIN 29"/>
    <property type="match status" value="1"/>
</dbReference>
<dbReference type="Pfam" id="PF15248">
    <property type="entry name" value="DUF4587"/>
    <property type="match status" value="1"/>
</dbReference>
<name>PRR29_MOUSE</name>
<gene>
    <name type="primary">Prr29</name>
</gene>